<gene>
    <name evidence="1" type="primary">ndhB2</name>
</gene>
<protein>
    <recommendedName>
        <fullName evidence="1">NAD(P)H-quinone oxidoreductase subunit 2 B, chloroplastic</fullName>
        <ecNumber evidence="1">7.1.1.-</ecNumber>
    </recommendedName>
    <alternativeName>
        <fullName evidence="1">NAD(P)H dehydrogenase, subunit 2 B</fullName>
    </alternativeName>
    <alternativeName>
        <fullName evidence="1">NADH-plastoquinone oxidoreductase subunit 2 B</fullName>
    </alternativeName>
</protein>
<name>NU2C2_PLAOC</name>
<comment type="function">
    <text evidence="1">NDH shuttles electrons from NAD(P)H:plastoquinone, via FMN and iron-sulfur (Fe-S) centers, to quinones in the photosynthetic chain and possibly in a chloroplast respiratory chain. The immediate electron acceptor for the enzyme in this species is believed to be plastoquinone. Couples the redox reaction to proton translocation, and thus conserves the redox energy in a proton gradient.</text>
</comment>
<comment type="catalytic activity">
    <reaction evidence="1">
        <text>a plastoquinone + NADH + (n+1) H(+)(in) = a plastoquinol + NAD(+) + n H(+)(out)</text>
        <dbReference type="Rhea" id="RHEA:42608"/>
        <dbReference type="Rhea" id="RHEA-COMP:9561"/>
        <dbReference type="Rhea" id="RHEA-COMP:9562"/>
        <dbReference type="ChEBI" id="CHEBI:15378"/>
        <dbReference type="ChEBI" id="CHEBI:17757"/>
        <dbReference type="ChEBI" id="CHEBI:57540"/>
        <dbReference type="ChEBI" id="CHEBI:57945"/>
        <dbReference type="ChEBI" id="CHEBI:62192"/>
    </reaction>
</comment>
<comment type="catalytic activity">
    <reaction evidence="1">
        <text>a plastoquinone + NADPH + (n+1) H(+)(in) = a plastoquinol + NADP(+) + n H(+)(out)</text>
        <dbReference type="Rhea" id="RHEA:42612"/>
        <dbReference type="Rhea" id="RHEA-COMP:9561"/>
        <dbReference type="Rhea" id="RHEA-COMP:9562"/>
        <dbReference type="ChEBI" id="CHEBI:15378"/>
        <dbReference type="ChEBI" id="CHEBI:17757"/>
        <dbReference type="ChEBI" id="CHEBI:57783"/>
        <dbReference type="ChEBI" id="CHEBI:58349"/>
        <dbReference type="ChEBI" id="CHEBI:62192"/>
    </reaction>
</comment>
<comment type="subunit">
    <text evidence="1">NDH is composed of at least 16 different subunits, 5 of which are encoded in the nucleus.</text>
</comment>
<comment type="subcellular location">
    <subcellularLocation>
        <location evidence="1">Plastid</location>
        <location evidence="1">Chloroplast thylakoid membrane</location>
        <topology evidence="1">Multi-pass membrane protein</topology>
    </subcellularLocation>
</comment>
<comment type="similarity">
    <text evidence="1">Belongs to the complex I subunit 2 family.</text>
</comment>
<evidence type="ECO:0000255" key="1">
    <source>
        <dbReference type="HAMAP-Rule" id="MF_00445"/>
    </source>
</evidence>
<dbReference type="EC" id="7.1.1.-" evidence="1"/>
<dbReference type="EMBL" id="DQ923116">
    <property type="protein sequence ID" value="ABI49839.1"/>
    <property type="molecule type" value="Genomic_DNA"/>
</dbReference>
<dbReference type="SMR" id="P0CD33"/>
<dbReference type="GO" id="GO:0009535">
    <property type="term" value="C:chloroplast thylakoid membrane"/>
    <property type="evidence" value="ECO:0007669"/>
    <property type="project" value="UniProtKB-SubCell"/>
</dbReference>
<dbReference type="GO" id="GO:0008137">
    <property type="term" value="F:NADH dehydrogenase (ubiquinone) activity"/>
    <property type="evidence" value="ECO:0007669"/>
    <property type="project" value="InterPro"/>
</dbReference>
<dbReference type="GO" id="GO:0048038">
    <property type="term" value="F:quinone binding"/>
    <property type="evidence" value="ECO:0007669"/>
    <property type="project" value="UniProtKB-KW"/>
</dbReference>
<dbReference type="GO" id="GO:0042773">
    <property type="term" value="P:ATP synthesis coupled electron transport"/>
    <property type="evidence" value="ECO:0007669"/>
    <property type="project" value="InterPro"/>
</dbReference>
<dbReference type="GO" id="GO:0019684">
    <property type="term" value="P:photosynthesis, light reaction"/>
    <property type="evidence" value="ECO:0007669"/>
    <property type="project" value="UniProtKB-UniRule"/>
</dbReference>
<dbReference type="HAMAP" id="MF_00445">
    <property type="entry name" value="NDH1_NuoN_1"/>
    <property type="match status" value="1"/>
</dbReference>
<dbReference type="InterPro" id="IPR010096">
    <property type="entry name" value="NADH-Q_OxRdtase_suN/2"/>
</dbReference>
<dbReference type="InterPro" id="IPR001750">
    <property type="entry name" value="ND/Mrp_TM"/>
</dbReference>
<dbReference type="InterPro" id="IPR045693">
    <property type="entry name" value="Ndh2_N"/>
</dbReference>
<dbReference type="NCBIfam" id="TIGR01770">
    <property type="entry name" value="NDH_I_N"/>
    <property type="match status" value="1"/>
</dbReference>
<dbReference type="NCBIfam" id="NF002701">
    <property type="entry name" value="PRK02504.1"/>
    <property type="match status" value="1"/>
</dbReference>
<dbReference type="PANTHER" id="PTHR22773">
    <property type="entry name" value="NADH DEHYDROGENASE"/>
    <property type="match status" value="1"/>
</dbReference>
<dbReference type="Pfam" id="PF19530">
    <property type="entry name" value="Ndh2_N"/>
    <property type="match status" value="1"/>
</dbReference>
<dbReference type="Pfam" id="PF00361">
    <property type="entry name" value="Proton_antipo_M"/>
    <property type="match status" value="1"/>
</dbReference>
<dbReference type="PRINTS" id="PR01434">
    <property type="entry name" value="NADHDHGNASE5"/>
</dbReference>
<reference key="1">
    <citation type="journal article" date="2006" name="BMC Plant Biol.">
        <title>Rapid and accurate pyrosequencing of angiosperm plastid genomes.</title>
        <authorList>
            <person name="Moore M.J."/>
            <person name="Dhingra A."/>
            <person name="Soltis P.S."/>
            <person name="Shaw R."/>
            <person name="Farmerie W.G."/>
            <person name="Folta K.M."/>
            <person name="Soltis D.E."/>
        </authorList>
    </citation>
    <scope>NUCLEOTIDE SEQUENCE [LARGE SCALE GENOMIC DNA]</scope>
</reference>
<accession>P0CD33</accession>
<accession>Q09FY6</accession>
<keyword id="KW-0150">Chloroplast</keyword>
<keyword id="KW-0472">Membrane</keyword>
<keyword id="KW-0520">NAD</keyword>
<keyword id="KW-0521">NADP</keyword>
<keyword id="KW-0934">Plastid</keyword>
<keyword id="KW-0618">Plastoquinone</keyword>
<keyword id="KW-0874">Quinone</keyword>
<keyword id="KW-0793">Thylakoid</keyword>
<keyword id="KW-1278">Translocase</keyword>
<keyword id="KW-0812">Transmembrane</keyword>
<keyword id="KW-1133">Transmembrane helix</keyword>
<keyword id="KW-0813">Transport</keyword>
<feature type="chain" id="PRO_0000391304" description="NAD(P)H-quinone oxidoreductase subunit 2 B, chloroplastic">
    <location>
        <begin position="1"/>
        <end position="510"/>
    </location>
</feature>
<feature type="transmembrane region" description="Helical" evidence="1">
    <location>
        <begin position="24"/>
        <end position="44"/>
    </location>
</feature>
<feature type="transmembrane region" description="Helical" evidence="1">
    <location>
        <begin position="57"/>
        <end position="77"/>
    </location>
</feature>
<feature type="transmembrane region" description="Helical" evidence="1">
    <location>
        <begin position="99"/>
        <end position="119"/>
    </location>
</feature>
<feature type="transmembrane region" description="Helical" evidence="1">
    <location>
        <begin position="124"/>
        <end position="144"/>
    </location>
</feature>
<feature type="transmembrane region" description="Helical" evidence="1">
    <location>
        <begin position="149"/>
        <end position="169"/>
    </location>
</feature>
<feature type="transmembrane region" description="Helical" evidence="1">
    <location>
        <begin position="183"/>
        <end position="203"/>
    </location>
</feature>
<feature type="transmembrane region" description="Helical" evidence="1">
    <location>
        <begin position="227"/>
        <end position="247"/>
    </location>
</feature>
<feature type="transmembrane region" description="Helical" evidence="1">
    <location>
        <begin position="295"/>
        <end position="315"/>
    </location>
</feature>
<feature type="transmembrane region" description="Helical" evidence="1">
    <location>
        <begin position="323"/>
        <end position="343"/>
    </location>
</feature>
<feature type="transmembrane region" description="Helical" evidence="1">
    <location>
        <begin position="347"/>
        <end position="367"/>
    </location>
</feature>
<feature type="transmembrane region" description="Helical" evidence="1">
    <location>
        <begin position="395"/>
        <end position="415"/>
    </location>
</feature>
<feature type="transmembrane region" description="Helical" evidence="1">
    <location>
        <begin position="418"/>
        <end position="438"/>
    </location>
</feature>
<feature type="transmembrane region" description="Helical" evidence="1">
    <location>
        <begin position="484"/>
        <end position="504"/>
    </location>
</feature>
<proteinExistence type="inferred from homology"/>
<sequence length="510" mass="56661">MIWHVQNENFILDSTRIFMKAFHLLLFHGSFIFPECILIFGLILLLMIDSTSDQKDIPWLYFISSTSLVMSITALLFRWREEPMISFSGNFQTNNFNEIFQFLILLCSTLCIPLSVEYIECTEMAITEFLLFVLTATLGGMFLCGANDLITIFVAPECFSLCSYLLSGYTKRDVRSNEATTKYLLMGGASSSILVHGFSWLYGSSGGEIELQEIVNGLINTQMYNSPGISIALIFITVGIGFKLSPAPSHQWTPDVYEGSPTPVVAFLSVTSKVAASASATRIFDIPFYFSSNEWHLLLEILAILSMILGNLIAITQTSMKRMLAYSSIGQIGYVIIGIIVGDSNDGYASMITYMLFYISMNLGTFARIVSFGLRTGTDNIRDYAGLYTKDPFLALSSALCLLSLGGLPPLAGFFGKLHLFWCGWQAGLYFLVSIGLLTSVVSIYYYLKIIKLLMTGRNQEITPHVRNYRRSPLRSNNSIELSMIVCVIASTIPGISMNPIIAIAQDTLF</sequence>
<organism>
    <name type="scientific">Platanus occidentalis</name>
    <name type="common">Sycamore</name>
    <name type="synonym">American plane tree</name>
    <dbReference type="NCBI Taxonomy" id="4403"/>
    <lineage>
        <taxon>Eukaryota</taxon>
        <taxon>Viridiplantae</taxon>
        <taxon>Streptophyta</taxon>
        <taxon>Embryophyta</taxon>
        <taxon>Tracheophyta</taxon>
        <taxon>Spermatophyta</taxon>
        <taxon>Magnoliopsida</taxon>
        <taxon>Proteales</taxon>
        <taxon>Platanaceae</taxon>
        <taxon>Platanus</taxon>
    </lineage>
</organism>
<geneLocation type="chloroplast"/>